<reference key="1">
    <citation type="journal article" date="2016" name="Front. Microbiol.">
        <title>The complete genome sequence of hyperthermophile Dictyoglomus turgidum DSM 6724 reveals a specialized carbohydrate fermentor.</title>
        <authorList>
            <person name="Brumm P.J."/>
            <person name="Gowda K."/>
            <person name="Robb F.T."/>
            <person name="Mead D.A."/>
        </authorList>
    </citation>
    <scope>NUCLEOTIDE SEQUENCE [LARGE SCALE GENOMIC DNA]</scope>
    <source>
        <strain>DSM 6724 / Z-1310</strain>
    </source>
</reference>
<sequence length="592" mass="68344">MRRTHYCGELNAKNIGEKVYLSGWVHRIRHHGGLIFIDLRDRSGIVQLVFDPSISKESYDIADTVGNEWVISVEGKVRKRPEGMENPKIPTGEIEIEVEKIKIENTAKPLPFNLWTNKEIDEIVRLKYRYLDLRRDKMQSNIIFRHNFILSIRNFLAKNGFIEIETPYLIVSTPEGARDFIIPSRLQPGKFYALPQSPQLFKQILMVAGFDRYFQIARCFRDEDLRADRQPEFTQLDMEMSFIEVEDVFTIIEELFKTVLKEVMNIEINTPFPRLSYEDAMNTYGSDKPDLRYDLKIVDVTNILKDLPLEFIRSTIEKDGVIKGIVLKNIVPSRREWSIIENKVRELKGKGIMWFTYADGELKSSISKYLDENIKDKLIKNLNLKSGDSFFCIAGTWKDVVKILGILRLEVAELFNMEKKEGLFFLWITDFPLFEYDEEERRIVAEHHPFTSPKDEDIPLLDTNPLKVKAKCYDLVLNGTELGSGSIRIHKKEIQEKVFNILGITPEDAKKKFGFLLEAFEYGAPPHGGIALGIDRIIAILTNSNSLREVIAFPKTQSGTCLLTGAPSEVDPKQLEEVHIKVVYPEEKKEED</sequence>
<gene>
    <name evidence="1" type="primary">aspS</name>
    <name type="ordered locus">Dtur_0968</name>
</gene>
<feature type="chain" id="PRO_1000198981" description="Aspartate--tRNA(Asp/Asn) ligase">
    <location>
        <begin position="1"/>
        <end position="592"/>
    </location>
</feature>
<feature type="region of interest" description="Aspartate" evidence="1">
    <location>
        <begin position="199"/>
        <end position="202"/>
    </location>
</feature>
<feature type="binding site" evidence="1">
    <location>
        <position position="175"/>
    </location>
    <ligand>
        <name>L-aspartate</name>
        <dbReference type="ChEBI" id="CHEBI:29991"/>
    </ligand>
</feature>
<feature type="binding site" evidence="1">
    <location>
        <begin position="221"/>
        <end position="223"/>
    </location>
    <ligand>
        <name>ATP</name>
        <dbReference type="ChEBI" id="CHEBI:30616"/>
    </ligand>
</feature>
<feature type="binding site" evidence="1">
    <location>
        <position position="221"/>
    </location>
    <ligand>
        <name>L-aspartate</name>
        <dbReference type="ChEBI" id="CHEBI:29991"/>
    </ligand>
</feature>
<feature type="binding site" evidence="1">
    <location>
        <position position="230"/>
    </location>
    <ligand>
        <name>ATP</name>
        <dbReference type="ChEBI" id="CHEBI:30616"/>
    </ligand>
</feature>
<feature type="binding site" evidence="1">
    <location>
        <position position="447"/>
    </location>
    <ligand>
        <name>L-aspartate</name>
        <dbReference type="ChEBI" id="CHEBI:29991"/>
    </ligand>
</feature>
<feature type="binding site" evidence="1">
    <location>
        <position position="481"/>
    </location>
    <ligand>
        <name>ATP</name>
        <dbReference type="ChEBI" id="CHEBI:30616"/>
    </ligand>
</feature>
<feature type="binding site" evidence="1">
    <location>
        <position position="488"/>
    </location>
    <ligand>
        <name>L-aspartate</name>
        <dbReference type="ChEBI" id="CHEBI:29991"/>
    </ligand>
</feature>
<feature type="binding site" evidence="1">
    <location>
        <begin position="533"/>
        <end position="536"/>
    </location>
    <ligand>
        <name>ATP</name>
        <dbReference type="ChEBI" id="CHEBI:30616"/>
    </ligand>
</feature>
<feature type="site" description="Important for tRNA non-discrimination" evidence="1">
    <location>
        <position position="31"/>
    </location>
</feature>
<feature type="site" description="Important for tRNA non-discrimination" evidence="1">
    <location>
        <position position="83"/>
    </location>
</feature>
<protein>
    <recommendedName>
        <fullName evidence="1">Aspartate--tRNA(Asp/Asn) ligase</fullName>
        <ecNumber evidence="1">6.1.1.23</ecNumber>
    </recommendedName>
    <alternativeName>
        <fullName evidence="1">Aspartyl-tRNA synthetase</fullName>
        <shortName evidence="1">AspRS</shortName>
    </alternativeName>
    <alternativeName>
        <fullName evidence="1">Non-discriminating aspartyl-tRNA synthetase</fullName>
        <shortName evidence="1">ND-AspRS</shortName>
    </alternativeName>
</protein>
<accession>B8E1C0</accession>
<name>SYDND_DICTD</name>
<comment type="function">
    <text evidence="1">Aspartyl-tRNA synthetase with relaxed tRNA specificity since it is able to aspartylate not only its cognate tRNA(Asp) but also tRNA(Asn). Reaction proceeds in two steps: L-aspartate is first activated by ATP to form Asp-AMP and then transferred to the acceptor end of tRNA(Asp/Asn).</text>
</comment>
<comment type="catalytic activity">
    <reaction evidence="1">
        <text>tRNA(Asx) + L-aspartate + ATP = L-aspartyl-tRNA(Asx) + AMP + diphosphate</text>
        <dbReference type="Rhea" id="RHEA:18349"/>
        <dbReference type="Rhea" id="RHEA-COMP:9710"/>
        <dbReference type="Rhea" id="RHEA-COMP:9711"/>
        <dbReference type="ChEBI" id="CHEBI:29991"/>
        <dbReference type="ChEBI" id="CHEBI:30616"/>
        <dbReference type="ChEBI" id="CHEBI:33019"/>
        <dbReference type="ChEBI" id="CHEBI:78442"/>
        <dbReference type="ChEBI" id="CHEBI:78516"/>
        <dbReference type="ChEBI" id="CHEBI:456215"/>
        <dbReference type="EC" id="6.1.1.23"/>
    </reaction>
</comment>
<comment type="subunit">
    <text evidence="1">Homodimer.</text>
</comment>
<comment type="subcellular location">
    <subcellularLocation>
        <location evidence="1">Cytoplasm</location>
    </subcellularLocation>
</comment>
<comment type="similarity">
    <text evidence="1">Belongs to the class-II aminoacyl-tRNA synthetase family. Type 1 subfamily.</text>
</comment>
<dbReference type="EC" id="6.1.1.23" evidence="1"/>
<dbReference type="EMBL" id="CP001251">
    <property type="protein sequence ID" value="ACK42248.1"/>
    <property type="molecule type" value="Genomic_DNA"/>
</dbReference>
<dbReference type="RefSeq" id="WP_012583332.1">
    <property type="nucleotide sequence ID" value="NC_011661.1"/>
</dbReference>
<dbReference type="RefSeq" id="YP_002352862.1">
    <property type="nucleotide sequence ID" value="NC_011661.1"/>
</dbReference>
<dbReference type="SMR" id="B8E1C0"/>
<dbReference type="FunCoup" id="B8E1C0">
    <property type="interactions" value="392"/>
</dbReference>
<dbReference type="STRING" id="515635.Dtur_0968"/>
<dbReference type="EnsemblBacteria" id="ACK42248">
    <property type="protein sequence ID" value="ACK42248"/>
    <property type="gene ID" value="Dtur_0968"/>
</dbReference>
<dbReference type="KEGG" id="dtu:Dtur_0968"/>
<dbReference type="PATRIC" id="fig|515635.4.peg.1005"/>
<dbReference type="eggNOG" id="COG0173">
    <property type="taxonomic scope" value="Bacteria"/>
</dbReference>
<dbReference type="HOGENOM" id="CLU_014330_3_2_0"/>
<dbReference type="InParanoid" id="B8E1C0"/>
<dbReference type="OrthoDB" id="9802326at2"/>
<dbReference type="Proteomes" id="UP000007719">
    <property type="component" value="Chromosome"/>
</dbReference>
<dbReference type="GO" id="GO:0005737">
    <property type="term" value="C:cytoplasm"/>
    <property type="evidence" value="ECO:0007669"/>
    <property type="project" value="UniProtKB-SubCell"/>
</dbReference>
<dbReference type="GO" id="GO:0004815">
    <property type="term" value="F:aspartate-tRNA ligase activity"/>
    <property type="evidence" value="ECO:0000318"/>
    <property type="project" value="GO_Central"/>
</dbReference>
<dbReference type="GO" id="GO:0050560">
    <property type="term" value="F:aspartate-tRNA(Asn) ligase activity"/>
    <property type="evidence" value="ECO:0007669"/>
    <property type="project" value="UniProtKB-EC"/>
</dbReference>
<dbReference type="GO" id="GO:0005524">
    <property type="term" value="F:ATP binding"/>
    <property type="evidence" value="ECO:0007669"/>
    <property type="project" value="UniProtKB-UniRule"/>
</dbReference>
<dbReference type="GO" id="GO:0003676">
    <property type="term" value="F:nucleic acid binding"/>
    <property type="evidence" value="ECO:0007669"/>
    <property type="project" value="InterPro"/>
</dbReference>
<dbReference type="GO" id="GO:0006422">
    <property type="term" value="P:aspartyl-tRNA aminoacylation"/>
    <property type="evidence" value="ECO:0000318"/>
    <property type="project" value="GO_Central"/>
</dbReference>
<dbReference type="CDD" id="cd00777">
    <property type="entry name" value="AspRS_core"/>
    <property type="match status" value="1"/>
</dbReference>
<dbReference type="CDD" id="cd04317">
    <property type="entry name" value="EcAspRS_like_N"/>
    <property type="match status" value="1"/>
</dbReference>
<dbReference type="Gene3D" id="3.30.930.10">
    <property type="entry name" value="Bira Bifunctional Protein, Domain 2"/>
    <property type="match status" value="1"/>
</dbReference>
<dbReference type="Gene3D" id="3.30.1360.30">
    <property type="entry name" value="GAD-like domain"/>
    <property type="match status" value="1"/>
</dbReference>
<dbReference type="Gene3D" id="2.40.50.140">
    <property type="entry name" value="Nucleic acid-binding proteins"/>
    <property type="match status" value="1"/>
</dbReference>
<dbReference type="HAMAP" id="MF_00044">
    <property type="entry name" value="Asp_tRNA_synth_type1"/>
    <property type="match status" value="1"/>
</dbReference>
<dbReference type="InterPro" id="IPR004364">
    <property type="entry name" value="Aa-tRNA-synt_II"/>
</dbReference>
<dbReference type="InterPro" id="IPR006195">
    <property type="entry name" value="aa-tRNA-synth_II"/>
</dbReference>
<dbReference type="InterPro" id="IPR045864">
    <property type="entry name" value="aa-tRNA-synth_II/BPL/LPL"/>
</dbReference>
<dbReference type="InterPro" id="IPR004524">
    <property type="entry name" value="Asp-tRNA-ligase_1"/>
</dbReference>
<dbReference type="InterPro" id="IPR047089">
    <property type="entry name" value="Asp-tRNA-ligase_1_N"/>
</dbReference>
<dbReference type="InterPro" id="IPR002312">
    <property type="entry name" value="Asp/Asn-tRNA-synth_IIb"/>
</dbReference>
<dbReference type="InterPro" id="IPR047090">
    <property type="entry name" value="AspRS_core"/>
</dbReference>
<dbReference type="InterPro" id="IPR004115">
    <property type="entry name" value="GAD-like_sf"/>
</dbReference>
<dbReference type="InterPro" id="IPR029351">
    <property type="entry name" value="GAD_dom"/>
</dbReference>
<dbReference type="InterPro" id="IPR012340">
    <property type="entry name" value="NA-bd_OB-fold"/>
</dbReference>
<dbReference type="InterPro" id="IPR004365">
    <property type="entry name" value="NA-bd_OB_tRNA"/>
</dbReference>
<dbReference type="NCBIfam" id="TIGR00459">
    <property type="entry name" value="aspS_bact"/>
    <property type="match status" value="1"/>
</dbReference>
<dbReference type="NCBIfam" id="NF001750">
    <property type="entry name" value="PRK00476.1"/>
    <property type="match status" value="1"/>
</dbReference>
<dbReference type="PANTHER" id="PTHR22594:SF5">
    <property type="entry name" value="ASPARTATE--TRNA LIGASE, MITOCHONDRIAL"/>
    <property type="match status" value="1"/>
</dbReference>
<dbReference type="PANTHER" id="PTHR22594">
    <property type="entry name" value="ASPARTYL/LYSYL-TRNA SYNTHETASE"/>
    <property type="match status" value="1"/>
</dbReference>
<dbReference type="Pfam" id="PF02938">
    <property type="entry name" value="GAD"/>
    <property type="match status" value="1"/>
</dbReference>
<dbReference type="Pfam" id="PF00152">
    <property type="entry name" value="tRNA-synt_2"/>
    <property type="match status" value="1"/>
</dbReference>
<dbReference type="Pfam" id="PF01336">
    <property type="entry name" value="tRNA_anti-codon"/>
    <property type="match status" value="1"/>
</dbReference>
<dbReference type="PRINTS" id="PR01042">
    <property type="entry name" value="TRNASYNTHASP"/>
</dbReference>
<dbReference type="SUPFAM" id="SSF55681">
    <property type="entry name" value="Class II aaRS and biotin synthetases"/>
    <property type="match status" value="1"/>
</dbReference>
<dbReference type="SUPFAM" id="SSF55261">
    <property type="entry name" value="GAD domain-like"/>
    <property type="match status" value="1"/>
</dbReference>
<dbReference type="SUPFAM" id="SSF50249">
    <property type="entry name" value="Nucleic acid-binding proteins"/>
    <property type="match status" value="1"/>
</dbReference>
<dbReference type="PROSITE" id="PS50862">
    <property type="entry name" value="AA_TRNA_LIGASE_II"/>
    <property type="match status" value="1"/>
</dbReference>
<evidence type="ECO:0000255" key="1">
    <source>
        <dbReference type="HAMAP-Rule" id="MF_00044"/>
    </source>
</evidence>
<proteinExistence type="inferred from homology"/>
<keyword id="KW-0030">Aminoacyl-tRNA synthetase</keyword>
<keyword id="KW-0067">ATP-binding</keyword>
<keyword id="KW-0963">Cytoplasm</keyword>
<keyword id="KW-0436">Ligase</keyword>
<keyword id="KW-0547">Nucleotide-binding</keyword>
<keyword id="KW-0648">Protein biosynthesis</keyword>
<keyword id="KW-1185">Reference proteome</keyword>
<organism>
    <name type="scientific">Dictyoglomus turgidum (strain DSM 6724 / Z-1310)</name>
    <dbReference type="NCBI Taxonomy" id="515635"/>
    <lineage>
        <taxon>Bacteria</taxon>
        <taxon>Pseudomonadati</taxon>
        <taxon>Dictyoglomota</taxon>
        <taxon>Dictyoglomia</taxon>
        <taxon>Dictyoglomales</taxon>
        <taxon>Dictyoglomaceae</taxon>
        <taxon>Dictyoglomus</taxon>
    </lineage>
</organism>